<accession>Q9S2X5</accession>
<proteinExistence type="inferred from homology"/>
<protein>
    <recommendedName>
        <fullName evidence="1">Isoleucine--tRNA ligase</fullName>
        <ecNumber evidence="1">6.1.1.5</ecNumber>
    </recommendedName>
    <alternativeName>
        <fullName evidence="1">Isoleucyl-tRNA synthetase</fullName>
        <shortName evidence="1">IleRS</shortName>
    </alternativeName>
</protein>
<organism>
    <name type="scientific">Streptomyces coelicolor (strain ATCC BAA-471 / A3(2) / M145)</name>
    <dbReference type="NCBI Taxonomy" id="100226"/>
    <lineage>
        <taxon>Bacteria</taxon>
        <taxon>Bacillati</taxon>
        <taxon>Actinomycetota</taxon>
        <taxon>Actinomycetes</taxon>
        <taxon>Kitasatosporales</taxon>
        <taxon>Streptomycetaceae</taxon>
        <taxon>Streptomyces</taxon>
        <taxon>Streptomyces albidoflavus group</taxon>
    </lineage>
</organism>
<evidence type="ECO:0000255" key="1">
    <source>
        <dbReference type="HAMAP-Rule" id="MF_02003"/>
    </source>
</evidence>
<gene>
    <name evidence="1" type="primary">ileS</name>
    <name type="ordered locus">SCO2076</name>
    <name type="ORF">SC4A10.09</name>
</gene>
<sequence length="1047" mass="116886">MTTPQYRQVPAQVDLPALEHAVLDFWREQKIFAKSLEQSEGRPEWVFYEGPPTANGMPGAHHIEARVFKDVFPRFRTMRGYHVGRKAGWDCHGLPVELAVEKELGFSGKQDIEAYGIAEFNAKCRESVTRHTDAFEELTTRMGYWADLQDPYRTMDPEYIESVWWSLKEIFNKGLLVQDHRVAPWCPRCGTGLSDHELAQGYETVVDPSVYVRFPLTSGPLAGEAALVVWTTTPWTLVSNTAVAAHPDVTYVVATDGEEKLVVAEPLLAKALGEGWETTGQSFTGAEMERWTYQRPFELVEFPEPAHYVVNADYVTTEDGTGLVHQSPAFGEDDLKVCRAYGLPVVNPVRPDGTFEEDVPLVGGVFFKKADEKLTEDLETRGLLFKHIPYEHSYPHCWRCHTALLYYAQPSWYIRTTAIKDRLLQENEKTNWFPDAVKHGRYGDWLNNNIDWALSRNRYWGTPLPIWRCAEDHLTVVGSRAELTELSGTDQSSLDPHRPFIDDVTFTCAQEGCSLEAVRVPEVIDAWYDSGSMPFAQWGYPYKNKELFESRYPAQFISEAIDQTRGWFYTLMAVGTLVFDKSSYENVVCLGHILAEDGRKMSKHLGNILQPIPLMDQHGADAVRWFMAAGGSPWAARRVGHGTIQEVVRKTLLTYWNTVAFQALYARTTGWAPSEADPAPADRPVLDRWLLSELHALTDQVTQALDAYDTQRAGKLLSAFVDDLSNWYVRRSRRRFWQGDKAALRTLHEVVETVTKLMAPLTPFITERVWQDLVVPVTPGAPESVHLSSWPEADLTAIDPELSKQMVLVRRLVELGRATRAESGVKTRQPLSRALIAVAGFDTLSPELHSQITEELNVASLASLSEVGGSLVDTTAKANFRALGKRFGKRVQDVAKAVAAADAAALSLALREGTASVEVDGETVTLAPDEVIITETPREGWSVASDSGATVALDLELTEELRRAGLARDAIRLIQEARKNSGLDVADRIALRWTATDPATIAALTDHSGLISDEVLATDFAQGEADDSYGAPFTDEGLSLVFRLRKQ</sequence>
<feature type="chain" id="PRO_0000098564" description="Isoleucine--tRNA ligase">
    <location>
        <begin position="1"/>
        <end position="1047"/>
    </location>
</feature>
<feature type="short sequence motif" description="'HIGH' region">
    <location>
        <begin position="52"/>
        <end position="62"/>
    </location>
</feature>
<feature type="short sequence motif" description="'KMSKS' region">
    <location>
        <begin position="600"/>
        <end position="604"/>
    </location>
</feature>
<feature type="binding site" evidence="1">
    <location>
        <position position="603"/>
    </location>
    <ligand>
        <name>ATP</name>
        <dbReference type="ChEBI" id="CHEBI:30616"/>
    </ligand>
</feature>
<dbReference type="EC" id="6.1.1.5" evidence="1"/>
<dbReference type="EMBL" id="AL939111">
    <property type="protein sequence ID" value="CAB51985.1"/>
    <property type="molecule type" value="Genomic_DNA"/>
</dbReference>
<dbReference type="PIR" id="T34946">
    <property type="entry name" value="T34946"/>
</dbReference>
<dbReference type="RefSeq" id="NP_626335.1">
    <property type="nucleotide sequence ID" value="NC_003888.3"/>
</dbReference>
<dbReference type="RefSeq" id="WP_003976739.1">
    <property type="nucleotide sequence ID" value="NZ_VNID01000001.1"/>
</dbReference>
<dbReference type="SMR" id="Q9S2X5"/>
<dbReference type="FunCoup" id="Q9S2X5">
    <property type="interactions" value="440"/>
</dbReference>
<dbReference type="STRING" id="100226.gene:17759674"/>
<dbReference type="PaxDb" id="100226-SCO2076"/>
<dbReference type="KEGG" id="sco:SCO2076"/>
<dbReference type="PATRIC" id="fig|100226.15.peg.2109"/>
<dbReference type="eggNOG" id="COG0060">
    <property type="taxonomic scope" value="Bacteria"/>
</dbReference>
<dbReference type="HOGENOM" id="CLU_001493_1_1_11"/>
<dbReference type="InParanoid" id="Q9S2X5"/>
<dbReference type="OrthoDB" id="9810365at2"/>
<dbReference type="PhylomeDB" id="Q9S2X5"/>
<dbReference type="Proteomes" id="UP000001973">
    <property type="component" value="Chromosome"/>
</dbReference>
<dbReference type="GO" id="GO:0005737">
    <property type="term" value="C:cytoplasm"/>
    <property type="evidence" value="ECO:0007669"/>
    <property type="project" value="UniProtKB-SubCell"/>
</dbReference>
<dbReference type="GO" id="GO:0002161">
    <property type="term" value="F:aminoacyl-tRNA deacylase activity"/>
    <property type="evidence" value="ECO:0007669"/>
    <property type="project" value="InterPro"/>
</dbReference>
<dbReference type="GO" id="GO:0005524">
    <property type="term" value="F:ATP binding"/>
    <property type="evidence" value="ECO:0007669"/>
    <property type="project" value="UniProtKB-UniRule"/>
</dbReference>
<dbReference type="GO" id="GO:0004822">
    <property type="term" value="F:isoleucine-tRNA ligase activity"/>
    <property type="evidence" value="ECO:0000318"/>
    <property type="project" value="GO_Central"/>
</dbReference>
<dbReference type="GO" id="GO:0000049">
    <property type="term" value="F:tRNA binding"/>
    <property type="evidence" value="ECO:0007669"/>
    <property type="project" value="InterPro"/>
</dbReference>
<dbReference type="GO" id="GO:0008270">
    <property type="term" value="F:zinc ion binding"/>
    <property type="evidence" value="ECO:0007669"/>
    <property type="project" value="UniProtKB-UniRule"/>
</dbReference>
<dbReference type="GO" id="GO:0006428">
    <property type="term" value="P:isoleucyl-tRNA aminoacylation"/>
    <property type="evidence" value="ECO:0000318"/>
    <property type="project" value="GO_Central"/>
</dbReference>
<dbReference type="CDD" id="cd07961">
    <property type="entry name" value="Anticodon_Ia_Ile_ABEc"/>
    <property type="match status" value="1"/>
</dbReference>
<dbReference type="CDD" id="cd00818">
    <property type="entry name" value="IleRS_core"/>
    <property type="match status" value="1"/>
</dbReference>
<dbReference type="FunFam" id="1.10.730.10:FF:000021">
    <property type="entry name" value="Isoleucine--tRNA ligase"/>
    <property type="match status" value="1"/>
</dbReference>
<dbReference type="FunFam" id="3.40.50.620:FF:000063">
    <property type="entry name" value="Isoleucine--tRNA ligase"/>
    <property type="match status" value="1"/>
</dbReference>
<dbReference type="FunFam" id="3.40.50.620:FF:000075">
    <property type="entry name" value="Isoleucine--tRNA ligase"/>
    <property type="match status" value="1"/>
</dbReference>
<dbReference type="FunFam" id="3.90.740.10:FF:000016">
    <property type="entry name" value="Isoleucine--tRNA ligase"/>
    <property type="match status" value="1"/>
</dbReference>
<dbReference type="Gene3D" id="3.40.50.620">
    <property type="entry name" value="HUPs"/>
    <property type="match status" value="2"/>
</dbReference>
<dbReference type="Gene3D" id="1.10.730.10">
    <property type="entry name" value="Isoleucyl-tRNA Synthetase, Domain 1"/>
    <property type="match status" value="1"/>
</dbReference>
<dbReference type="Gene3D" id="3.90.740.10">
    <property type="entry name" value="Valyl/Leucyl/Isoleucyl-tRNA synthetase, editing domain"/>
    <property type="match status" value="1"/>
</dbReference>
<dbReference type="HAMAP" id="MF_02003">
    <property type="entry name" value="Ile_tRNA_synth_type2"/>
    <property type="match status" value="1"/>
</dbReference>
<dbReference type="InterPro" id="IPR002300">
    <property type="entry name" value="aa-tRNA-synth_Ia"/>
</dbReference>
<dbReference type="InterPro" id="IPR033709">
    <property type="entry name" value="Anticodon_Ile_ABEc"/>
</dbReference>
<dbReference type="InterPro" id="IPR002301">
    <property type="entry name" value="Ile-tRNA-ligase"/>
</dbReference>
<dbReference type="InterPro" id="IPR023586">
    <property type="entry name" value="Ile-tRNA-ligase_type2"/>
</dbReference>
<dbReference type="InterPro" id="IPR013155">
    <property type="entry name" value="M/V/L/I-tRNA-synth_anticd-bd"/>
</dbReference>
<dbReference type="InterPro" id="IPR014729">
    <property type="entry name" value="Rossmann-like_a/b/a_fold"/>
</dbReference>
<dbReference type="InterPro" id="IPR009080">
    <property type="entry name" value="tRNAsynth_Ia_anticodon-bd"/>
</dbReference>
<dbReference type="InterPro" id="IPR009008">
    <property type="entry name" value="Val/Leu/Ile-tRNA-synth_edit"/>
</dbReference>
<dbReference type="NCBIfam" id="TIGR00392">
    <property type="entry name" value="ileS"/>
    <property type="match status" value="1"/>
</dbReference>
<dbReference type="PANTHER" id="PTHR42780:SF1">
    <property type="entry name" value="ISOLEUCINE--TRNA LIGASE, CYTOPLASMIC"/>
    <property type="match status" value="1"/>
</dbReference>
<dbReference type="PANTHER" id="PTHR42780">
    <property type="entry name" value="SOLEUCYL-TRNA SYNTHETASE"/>
    <property type="match status" value="1"/>
</dbReference>
<dbReference type="Pfam" id="PF08264">
    <property type="entry name" value="Anticodon_1"/>
    <property type="match status" value="1"/>
</dbReference>
<dbReference type="Pfam" id="PF19302">
    <property type="entry name" value="DUF5915"/>
    <property type="match status" value="1"/>
</dbReference>
<dbReference type="Pfam" id="PF00133">
    <property type="entry name" value="tRNA-synt_1"/>
    <property type="match status" value="1"/>
</dbReference>
<dbReference type="PRINTS" id="PR00984">
    <property type="entry name" value="TRNASYNTHILE"/>
</dbReference>
<dbReference type="SUPFAM" id="SSF47323">
    <property type="entry name" value="Anticodon-binding domain of a subclass of class I aminoacyl-tRNA synthetases"/>
    <property type="match status" value="1"/>
</dbReference>
<dbReference type="SUPFAM" id="SSF52374">
    <property type="entry name" value="Nucleotidylyl transferase"/>
    <property type="match status" value="1"/>
</dbReference>
<dbReference type="SUPFAM" id="SSF50677">
    <property type="entry name" value="ValRS/IleRS/LeuRS editing domain"/>
    <property type="match status" value="1"/>
</dbReference>
<comment type="function">
    <text evidence="1">Catalyzes the attachment of isoleucine to tRNA(Ile). As IleRS can inadvertently accommodate and process structurally similar amino acids such as valine, to avoid such errors it has two additional distinct tRNA(Ile)-dependent editing activities. One activity is designated as 'pretransfer' editing and involves the hydrolysis of activated Val-AMP. The other activity is designated 'posttransfer' editing and involves deacylation of mischarged Val-tRNA(Ile).</text>
</comment>
<comment type="catalytic activity">
    <reaction evidence="1">
        <text>tRNA(Ile) + L-isoleucine + ATP = L-isoleucyl-tRNA(Ile) + AMP + diphosphate</text>
        <dbReference type="Rhea" id="RHEA:11060"/>
        <dbReference type="Rhea" id="RHEA-COMP:9666"/>
        <dbReference type="Rhea" id="RHEA-COMP:9695"/>
        <dbReference type="ChEBI" id="CHEBI:30616"/>
        <dbReference type="ChEBI" id="CHEBI:33019"/>
        <dbReference type="ChEBI" id="CHEBI:58045"/>
        <dbReference type="ChEBI" id="CHEBI:78442"/>
        <dbReference type="ChEBI" id="CHEBI:78528"/>
        <dbReference type="ChEBI" id="CHEBI:456215"/>
        <dbReference type="EC" id="6.1.1.5"/>
    </reaction>
</comment>
<comment type="cofactor">
    <cofactor evidence="1">
        <name>Zn(2+)</name>
        <dbReference type="ChEBI" id="CHEBI:29105"/>
    </cofactor>
</comment>
<comment type="subunit">
    <text evidence="1">Monomer.</text>
</comment>
<comment type="subcellular location">
    <subcellularLocation>
        <location evidence="1">Cytoplasm</location>
    </subcellularLocation>
</comment>
<comment type="domain">
    <text evidence="1">IleRS has two distinct active sites: one for aminoacylation and one for editing. The misactivated valine is translocated from the active site to the editing site, which sterically excludes the correctly activated isoleucine. The single editing site contains two valyl binding pockets, one specific for each substrate (Val-AMP or Val-tRNA(Ile)).</text>
</comment>
<comment type="similarity">
    <text evidence="1">Belongs to the class-I aminoacyl-tRNA synthetase family. IleS type 2 subfamily.</text>
</comment>
<name>SYI_STRCO</name>
<keyword id="KW-0030">Aminoacyl-tRNA synthetase</keyword>
<keyword id="KW-0067">ATP-binding</keyword>
<keyword id="KW-0963">Cytoplasm</keyword>
<keyword id="KW-0436">Ligase</keyword>
<keyword id="KW-0479">Metal-binding</keyword>
<keyword id="KW-0547">Nucleotide-binding</keyword>
<keyword id="KW-0648">Protein biosynthesis</keyword>
<keyword id="KW-1185">Reference proteome</keyword>
<keyword id="KW-0862">Zinc</keyword>
<reference key="1">
    <citation type="journal article" date="2002" name="Nature">
        <title>Complete genome sequence of the model actinomycete Streptomyces coelicolor A3(2).</title>
        <authorList>
            <person name="Bentley S.D."/>
            <person name="Chater K.F."/>
            <person name="Cerdeno-Tarraga A.-M."/>
            <person name="Challis G.L."/>
            <person name="Thomson N.R."/>
            <person name="James K.D."/>
            <person name="Harris D.E."/>
            <person name="Quail M.A."/>
            <person name="Kieser H."/>
            <person name="Harper D."/>
            <person name="Bateman A."/>
            <person name="Brown S."/>
            <person name="Chandra G."/>
            <person name="Chen C.W."/>
            <person name="Collins M."/>
            <person name="Cronin A."/>
            <person name="Fraser A."/>
            <person name="Goble A."/>
            <person name="Hidalgo J."/>
            <person name="Hornsby T."/>
            <person name="Howarth S."/>
            <person name="Huang C.-H."/>
            <person name="Kieser T."/>
            <person name="Larke L."/>
            <person name="Murphy L.D."/>
            <person name="Oliver K."/>
            <person name="O'Neil S."/>
            <person name="Rabbinowitsch E."/>
            <person name="Rajandream M.A."/>
            <person name="Rutherford K.M."/>
            <person name="Rutter S."/>
            <person name="Seeger K."/>
            <person name="Saunders D."/>
            <person name="Sharp S."/>
            <person name="Squares R."/>
            <person name="Squares S."/>
            <person name="Taylor K."/>
            <person name="Warren T."/>
            <person name="Wietzorrek A."/>
            <person name="Woodward J.R."/>
            <person name="Barrell B.G."/>
            <person name="Parkhill J."/>
            <person name="Hopwood D.A."/>
        </authorList>
    </citation>
    <scope>NUCLEOTIDE SEQUENCE [LARGE SCALE GENOMIC DNA]</scope>
    <source>
        <strain>ATCC BAA-471 / A3(2) / M145</strain>
    </source>
</reference>